<gene>
    <name type="primary">UL147</name>
</gene>
<accession>Q6SWN9</accession>
<organism>
    <name type="scientific">Human cytomegalovirus (strain Towne)</name>
    <name type="common">HHV-5</name>
    <name type="synonym">Human herpesvirus 5</name>
    <dbReference type="NCBI Taxonomy" id="10363"/>
    <lineage>
        <taxon>Viruses</taxon>
        <taxon>Duplodnaviria</taxon>
        <taxon>Heunggongvirae</taxon>
        <taxon>Peploviricota</taxon>
        <taxon>Herviviricetes</taxon>
        <taxon>Herpesvirales</taxon>
        <taxon>Orthoherpesviridae</taxon>
        <taxon>Betaherpesvirinae</taxon>
        <taxon>Cytomegalovirus</taxon>
        <taxon>Cytomegalovirus humanbeta5</taxon>
        <taxon>Human cytomegalovirus</taxon>
    </lineage>
</organism>
<keyword id="KW-1015">Disulfide bond</keyword>
<comment type="similarity">
    <text evidence="2">Belongs to the intercrine alpha (chemokine CxC) family.</text>
</comment>
<name>UL147_HCMVT</name>
<protein>
    <recommendedName>
        <fullName>Putative viral CXC chemokine 2</fullName>
        <shortName>vCXCL2</shortName>
    </recommendedName>
</protein>
<proteinExistence type="inferred from homology"/>
<organismHost>
    <name type="scientific">Homo sapiens</name>
    <name type="common">Human</name>
    <dbReference type="NCBI Taxonomy" id="9606"/>
</organismHost>
<dbReference type="EMBL" id="FJ616285">
    <property type="protein sequence ID" value="AAR31457.1"/>
    <property type="molecule type" value="Genomic_DNA"/>
</dbReference>
<dbReference type="SMR" id="Q6SWN9"/>
<dbReference type="Proteomes" id="UP000006907">
    <property type="component" value="Segment"/>
</dbReference>
<dbReference type="GO" id="GO:0005576">
    <property type="term" value="C:extracellular region"/>
    <property type="evidence" value="ECO:0007669"/>
    <property type="project" value="InterPro"/>
</dbReference>
<dbReference type="GO" id="GO:0008009">
    <property type="term" value="F:chemokine activity"/>
    <property type="evidence" value="ECO:0007669"/>
    <property type="project" value="InterPro"/>
</dbReference>
<dbReference type="GO" id="GO:0006952">
    <property type="term" value="P:defense response"/>
    <property type="evidence" value="ECO:0007669"/>
    <property type="project" value="InterPro"/>
</dbReference>
<dbReference type="GO" id="GO:0006955">
    <property type="term" value="P:immune response"/>
    <property type="evidence" value="ECO:0007669"/>
    <property type="project" value="InterPro"/>
</dbReference>
<dbReference type="CDD" id="cd00273">
    <property type="entry name" value="Chemokine_CXC"/>
    <property type="match status" value="1"/>
</dbReference>
<dbReference type="Gene3D" id="2.40.50.40">
    <property type="match status" value="1"/>
</dbReference>
<dbReference type="InterPro" id="IPR001811">
    <property type="entry name" value="Chemokine_IL8-like_dom"/>
</dbReference>
<dbReference type="InterPro" id="IPR033899">
    <property type="entry name" value="CXC_Chemokine_domain"/>
</dbReference>
<dbReference type="InterPro" id="IPR036048">
    <property type="entry name" value="Interleukin_8-like_sf"/>
</dbReference>
<dbReference type="Pfam" id="PF00048">
    <property type="entry name" value="IL8"/>
    <property type="match status" value="1"/>
</dbReference>
<dbReference type="SMART" id="SM00199">
    <property type="entry name" value="SCY"/>
    <property type="match status" value="1"/>
</dbReference>
<dbReference type="SUPFAM" id="SSF54117">
    <property type="entry name" value="Interleukin 8-like chemokines"/>
    <property type="match status" value="1"/>
</dbReference>
<sequence length="159" mass="18816">MMLRRLHHPILNPHTNILSVRYMQLTAYMLFVVCPLAVHLLELEDYDKRCRCNNQILLNTLPIGTELLKPIAASESCNRQEVLAILKDKGTKCLNPNAQAVRRHINRLFFRLILDEEQRIYDVVSTNIEFGAWPVPTAYKAFLWKYAKKLNYHHFRLRW</sequence>
<reference key="1">
    <citation type="journal article" date="2004" name="J. Gen. Virol.">
        <title>Genetic content of wild-type human cytomegalovirus.</title>
        <authorList>
            <person name="Dolan A."/>
            <person name="Cunningham C."/>
            <person name="Hector R.D."/>
            <person name="Hassan-Walker A.F."/>
            <person name="Lee L."/>
            <person name="Addison C."/>
            <person name="Dargan D.J."/>
            <person name="McGeoch D.J."/>
            <person name="Gatherer D."/>
            <person name="Emery V.C."/>
            <person name="Griffiths P.D."/>
            <person name="Sinzger C."/>
            <person name="McSharry B.P."/>
            <person name="Wilkinson G.W.G."/>
            <person name="Davison A.J."/>
        </authorList>
    </citation>
    <scope>NUCLEOTIDE SEQUENCE [LARGE SCALE GENOMIC DNA]</scope>
</reference>
<evidence type="ECO:0000250" key="1"/>
<evidence type="ECO:0000305" key="2"/>
<feature type="chain" id="PRO_0000416444" description="Putative viral CXC chemokine 2">
    <location>
        <begin position="1"/>
        <end position="159"/>
    </location>
</feature>
<feature type="disulfide bond" evidence="1">
    <location>
        <begin position="50"/>
        <end position="77"/>
    </location>
</feature>
<feature type="disulfide bond" evidence="1">
    <location>
        <begin position="52"/>
        <end position="93"/>
    </location>
</feature>